<sequence length="102" mass="11513">MTKQKIRIKLKGFDHKILDQSALQIVEALERTGATISGPVPLPTRIQRYSVIRSSFIDKDSQEQFEIRTHKRLIDIVETTSKTIDALTNLNLPAGVSIDIKL</sequence>
<name>RS10_DEHM1</name>
<feature type="chain" id="PRO_0000237036" description="Small ribosomal subunit protein uS10">
    <location>
        <begin position="1"/>
        <end position="102"/>
    </location>
</feature>
<organism>
    <name type="scientific">Dehalococcoides mccartyi (strain ATCC BAA-2266 / KCTC 15142 / 195)</name>
    <name type="common">Dehalococcoides ethenogenes (strain 195)</name>
    <dbReference type="NCBI Taxonomy" id="243164"/>
    <lineage>
        <taxon>Bacteria</taxon>
        <taxon>Bacillati</taxon>
        <taxon>Chloroflexota</taxon>
        <taxon>Dehalococcoidia</taxon>
        <taxon>Dehalococcoidales</taxon>
        <taxon>Dehalococcoidaceae</taxon>
        <taxon>Dehalococcoides</taxon>
    </lineage>
</organism>
<proteinExistence type="inferred from homology"/>
<evidence type="ECO:0000255" key="1">
    <source>
        <dbReference type="HAMAP-Rule" id="MF_00508"/>
    </source>
</evidence>
<evidence type="ECO:0000305" key="2"/>
<protein>
    <recommendedName>
        <fullName evidence="1">Small ribosomal subunit protein uS10</fullName>
    </recommendedName>
    <alternativeName>
        <fullName evidence="2">30S ribosomal protein S10</fullName>
    </alternativeName>
</protein>
<gene>
    <name evidence="1" type="primary">rpsJ</name>
    <name type="ordered locus">DET0473</name>
</gene>
<accession>Q3Z982</accession>
<dbReference type="EMBL" id="CP000027">
    <property type="protein sequence ID" value="AAW40192.1"/>
    <property type="molecule type" value="Genomic_DNA"/>
</dbReference>
<dbReference type="RefSeq" id="WP_010936250.1">
    <property type="nucleotide sequence ID" value="NC_002936.3"/>
</dbReference>
<dbReference type="SMR" id="Q3Z982"/>
<dbReference type="FunCoup" id="Q3Z982">
    <property type="interactions" value="374"/>
</dbReference>
<dbReference type="STRING" id="243164.DET0473"/>
<dbReference type="GeneID" id="3230156"/>
<dbReference type="KEGG" id="det:DET0473"/>
<dbReference type="eggNOG" id="COG0051">
    <property type="taxonomic scope" value="Bacteria"/>
</dbReference>
<dbReference type="HOGENOM" id="CLU_122625_1_3_0"/>
<dbReference type="InParanoid" id="Q3Z982"/>
<dbReference type="Proteomes" id="UP000008289">
    <property type="component" value="Chromosome"/>
</dbReference>
<dbReference type="GO" id="GO:1990904">
    <property type="term" value="C:ribonucleoprotein complex"/>
    <property type="evidence" value="ECO:0007669"/>
    <property type="project" value="UniProtKB-KW"/>
</dbReference>
<dbReference type="GO" id="GO:0005840">
    <property type="term" value="C:ribosome"/>
    <property type="evidence" value="ECO:0007669"/>
    <property type="project" value="UniProtKB-KW"/>
</dbReference>
<dbReference type="GO" id="GO:0003735">
    <property type="term" value="F:structural constituent of ribosome"/>
    <property type="evidence" value="ECO:0007669"/>
    <property type="project" value="InterPro"/>
</dbReference>
<dbReference type="GO" id="GO:0000049">
    <property type="term" value="F:tRNA binding"/>
    <property type="evidence" value="ECO:0007669"/>
    <property type="project" value="UniProtKB-UniRule"/>
</dbReference>
<dbReference type="GO" id="GO:0006412">
    <property type="term" value="P:translation"/>
    <property type="evidence" value="ECO:0007669"/>
    <property type="project" value="UniProtKB-UniRule"/>
</dbReference>
<dbReference type="FunFam" id="3.30.70.600:FF:000003">
    <property type="entry name" value="30S ribosomal protein S10"/>
    <property type="match status" value="1"/>
</dbReference>
<dbReference type="Gene3D" id="3.30.70.600">
    <property type="entry name" value="Ribosomal protein S10 domain"/>
    <property type="match status" value="1"/>
</dbReference>
<dbReference type="HAMAP" id="MF_00508">
    <property type="entry name" value="Ribosomal_uS10"/>
    <property type="match status" value="1"/>
</dbReference>
<dbReference type="InterPro" id="IPR001848">
    <property type="entry name" value="Ribosomal_uS10"/>
</dbReference>
<dbReference type="InterPro" id="IPR027486">
    <property type="entry name" value="Ribosomal_uS10_dom"/>
</dbReference>
<dbReference type="InterPro" id="IPR036838">
    <property type="entry name" value="Ribosomal_uS10_dom_sf"/>
</dbReference>
<dbReference type="NCBIfam" id="NF001861">
    <property type="entry name" value="PRK00596.1"/>
    <property type="match status" value="1"/>
</dbReference>
<dbReference type="NCBIfam" id="TIGR01049">
    <property type="entry name" value="rpsJ_bact"/>
    <property type="match status" value="1"/>
</dbReference>
<dbReference type="PANTHER" id="PTHR11700">
    <property type="entry name" value="30S RIBOSOMAL PROTEIN S10 FAMILY MEMBER"/>
    <property type="match status" value="1"/>
</dbReference>
<dbReference type="Pfam" id="PF00338">
    <property type="entry name" value="Ribosomal_S10"/>
    <property type="match status" value="1"/>
</dbReference>
<dbReference type="PRINTS" id="PR00971">
    <property type="entry name" value="RIBOSOMALS10"/>
</dbReference>
<dbReference type="SMART" id="SM01403">
    <property type="entry name" value="Ribosomal_S10"/>
    <property type="match status" value="1"/>
</dbReference>
<dbReference type="SUPFAM" id="SSF54999">
    <property type="entry name" value="Ribosomal protein S10"/>
    <property type="match status" value="1"/>
</dbReference>
<keyword id="KW-0687">Ribonucleoprotein</keyword>
<keyword id="KW-0689">Ribosomal protein</keyword>
<comment type="function">
    <text evidence="1">Involved in the binding of tRNA to the ribosomes.</text>
</comment>
<comment type="subunit">
    <text evidence="1">Part of the 30S ribosomal subunit.</text>
</comment>
<comment type="similarity">
    <text evidence="1">Belongs to the universal ribosomal protein uS10 family.</text>
</comment>
<reference key="1">
    <citation type="journal article" date="2005" name="Science">
        <title>Genome sequence of the PCE-dechlorinating bacterium Dehalococcoides ethenogenes.</title>
        <authorList>
            <person name="Seshadri R."/>
            <person name="Adrian L."/>
            <person name="Fouts D.E."/>
            <person name="Eisen J.A."/>
            <person name="Phillippy A.M."/>
            <person name="Methe B.A."/>
            <person name="Ward N.L."/>
            <person name="Nelson W.C."/>
            <person name="DeBoy R.T."/>
            <person name="Khouri H.M."/>
            <person name="Kolonay J.F."/>
            <person name="Dodson R.J."/>
            <person name="Daugherty S.C."/>
            <person name="Brinkac L.M."/>
            <person name="Sullivan S.A."/>
            <person name="Madupu R."/>
            <person name="Nelson K.E."/>
            <person name="Kang K.H."/>
            <person name="Impraim M."/>
            <person name="Tran K."/>
            <person name="Robinson J.M."/>
            <person name="Forberger H.A."/>
            <person name="Fraser C.M."/>
            <person name="Zinder S.H."/>
            <person name="Heidelberg J.F."/>
        </authorList>
    </citation>
    <scope>NUCLEOTIDE SEQUENCE [LARGE SCALE GENOMIC DNA]</scope>
    <source>
        <strain>ATCC BAA-2266 / KCTC 15142 / 195</strain>
    </source>
</reference>